<sequence length="239" mass="26624">MNGLNNHASNIEIVLPELIEAVFVERVNRFVGMVQVAGHICPAHVPSSGRMRELLFPGNIVYISPMPKGRKTQYRIHLAKYDDIMVSVDSLLPNRLMYKVLSEGAISHFAMYEEVKKEVGYGESRFDIYLKGEAGRCFIEVKSVTLVDEGVAKFPDAPSERGSKHLSELTRAVGEGYRSAVIFIIQRDDARSFSPNSITDPVFSQTLSQAIEAGVEIYALACDVSLNTVRLKKYIPVQL</sequence>
<gene>
    <name evidence="1" type="primary">sfsA</name>
    <name type="ordered locus">Dred_2531</name>
</gene>
<evidence type="ECO:0000255" key="1">
    <source>
        <dbReference type="HAMAP-Rule" id="MF_00095"/>
    </source>
</evidence>
<keyword id="KW-1185">Reference proteome</keyword>
<protein>
    <recommendedName>
        <fullName evidence="1">Sugar fermentation stimulation protein homolog</fullName>
    </recommendedName>
</protein>
<reference key="1">
    <citation type="submission" date="2007-03" db="EMBL/GenBank/DDBJ databases">
        <title>Complete sequence of Desulfotomaculum reducens MI-1.</title>
        <authorList>
            <consortium name="US DOE Joint Genome Institute"/>
            <person name="Copeland A."/>
            <person name="Lucas S."/>
            <person name="Lapidus A."/>
            <person name="Barry K."/>
            <person name="Detter J.C."/>
            <person name="Glavina del Rio T."/>
            <person name="Hammon N."/>
            <person name="Israni S."/>
            <person name="Dalin E."/>
            <person name="Tice H."/>
            <person name="Pitluck S."/>
            <person name="Sims D."/>
            <person name="Brettin T."/>
            <person name="Bruce D."/>
            <person name="Han C."/>
            <person name="Tapia R."/>
            <person name="Schmutz J."/>
            <person name="Larimer F."/>
            <person name="Land M."/>
            <person name="Hauser L."/>
            <person name="Kyrpides N."/>
            <person name="Kim E."/>
            <person name="Tebo B.M."/>
            <person name="Richardson P."/>
        </authorList>
    </citation>
    <scope>NUCLEOTIDE SEQUENCE [LARGE SCALE GENOMIC DNA]</scope>
    <source>
        <strain>ATCC BAA-1160 / DSM 100696 / MI-1</strain>
    </source>
</reference>
<accession>A4J7I8</accession>
<feature type="chain" id="PRO_0000340138" description="Sugar fermentation stimulation protein homolog">
    <location>
        <begin position="1"/>
        <end position="239"/>
    </location>
</feature>
<dbReference type="EMBL" id="CP000612">
    <property type="protein sequence ID" value="ABO51041.1"/>
    <property type="molecule type" value="Genomic_DNA"/>
</dbReference>
<dbReference type="RefSeq" id="WP_011878839.1">
    <property type="nucleotide sequence ID" value="NC_009253.1"/>
</dbReference>
<dbReference type="SMR" id="A4J7I8"/>
<dbReference type="STRING" id="349161.Dred_2531"/>
<dbReference type="KEGG" id="drm:Dred_2531"/>
<dbReference type="eggNOG" id="COG1489">
    <property type="taxonomic scope" value="Bacteria"/>
</dbReference>
<dbReference type="HOGENOM" id="CLU_052299_1_0_9"/>
<dbReference type="OrthoDB" id="9802365at2"/>
<dbReference type="Proteomes" id="UP000001556">
    <property type="component" value="Chromosome"/>
</dbReference>
<dbReference type="GO" id="GO:0003677">
    <property type="term" value="F:DNA binding"/>
    <property type="evidence" value="ECO:0007669"/>
    <property type="project" value="InterPro"/>
</dbReference>
<dbReference type="CDD" id="cd22359">
    <property type="entry name" value="SfsA-like_bacterial"/>
    <property type="match status" value="1"/>
</dbReference>
<dbReference type="Gene3D" id="2.40.50.580">
    <property type="match status" value="1"/>
</dbReference>
<dbReference type="Gene3D" id="3.40.1350.60">
    <property type="match status" value="1"/>
</dbReference>
<dbReference type="HAMAP" id="MF_00095">
    <property type="entry name" value="SfsA"/>
    <property type="match status" value="1"/>
</dbReference>
<dbReference type="InterPro" id="IPR005224">
    <property type="entry name" value="SfsA"/>
</dbReference>
<dbReference type="InterPro" id="IPR040452">
    <property type="entry name" value="SfsA_C"/>
</dbReference>
<dbReference type="InterPro" id="IPR041465">
    <property type="entry name" value="SfsA_N"/>
</dbReference>
<dbReference type="NCBIfam" id="TIGR00230">
    <property type="entry name" value="sfsA"/>
    <property type="match status" value="1"/>
</dbReference>
<dbReference type="PANTHER" id="PTHR30545">
    <property type="entry name" value="SUGAR FERMENTATION STIMULATION PROTEIN A"/>
    <property type="match status" value="1"/>
</dbReference>
<dbReference type="PANTHER" id="PTHR30545:SF2">
    <property type="entry name" value="SUGAR FERMENTATION STIMULATION PROTEIN A"/>
    <property type="match status" value="1"/>
</dbReference>
<dbReference type="Pfam" id="PF03749">
    <property type="entry name" value="SfsA"/>
    <property type="match status" value="1"/>
</dbReference>
<dbReference type="Pfam" id="PF17746">
    <property type="entry name" value="SfsA_N"/>
    <property type="match status" value="1"/>
</dbReference>
<proteinExistence type="inferred from homology"/>
<organism>
    <name type="scientific">Desulforamulus reducens (strain ATCC BAA-1160 / DSM 100696 / MI-1)</name>
    <name type="common">Desulfotomaculum reducens</name>
    <dbReference type="NCBI Taxonomy" id="349161"/>
    <lineage>
        <taxon>Bacteria</taxon>
        <taxon>Bacillati</taxon>
        <taxon>Bacillota</taxon>
        <taxon>Clostridia</taxon>
        <taxon>Eubacteriales</taxon>
        <taxon>Peptococcaceae</taxon>
        <taxon>Desulforamulus</taxon>
    </lineage>
</organism>
<comment type="similarity">
    <text evidence="1">Belongs to the SfsA family.</text>
</comment>
<name>SFSA_DESRM</name>